<protein>
    <recommendedName>
        <fullName>RILP-like protein 1</fullName>
    </recommendedName>
    <alternativeName>
        <fullName>Rab-interacting lysosomal-like protein 1</fullName>
    </alternativeName>
</protein>
<name>RIPL1_MOUSE</name>
<gene>
    <name type="primary">Rilpl1</name>
    <name type="ORF">MNCb-2440</name>
</gene>
<proteinExistence type="evidence at protein level"/>
<keyword id="KW-0966">Cell projection</keyword>
<keyword id="KW-0969">Cilium</keyword>
<keyword id="KW-0175">Coiled coil</keyword>
<keyword id="KW-0963">Cytoplasm</keyword>
<keyword id="KW-0206">Cytoskeleton</keyword>
<keyword id="KW-0597">Phosphoprotein</keyword>
<keyword id="KW-0653">Protein transport</keyword>
<keyword id="KW-1185">Reference proteome</keyword>
<keyword id="KW-0702">S-nitrosylation</keyword>
<keyword id="KW-0813">Transport</keyword>
<dbReference type="EMBL" id="AB041584">
    <property type="protein sequence ID" value="BAA95067.1"/>
    <property type="molecule type" value="mRNA"/>
</dbReference>
<dbReference type="EMBL" id="BC051945">
    <property type="protein sequence ID" value="AAH51945.1"/>
    <property type="molecule type" value="mRNA"/>
</dbReference>
<dbReference type="EMBL" id="BC051946">
    <property type="protein sequence ID" value="AAH51946.2"/>
    <property type="molecule type" value="mRNA"/>
</dbReference>
<dbReference type="EMBL" id="BC058384">
    <property type="protein sequence ID" value="AAH58384.1"/>
    <property type="molecule type" value="mRNA"/>
</dbReference>
<dbReference type="CCDS" id="CCDS19678.1"/>
<dbReference type="RefSeq" id="NP_067405.1">
    <property type="nucleotide sequence ID" value="NM_021430.3"/>
</dbReference>
<dbReference type="SMR" id="Q9JJC6"/>
<dbReference type="BioGRID" id="217678">
    <property type="interactions" value="4"/>
</dbReference>
<dbReference type="FunCoup" id="Q9JJC6">
    <property type="interactions" value="881"/>
</dbReference>
<dbReference type="IntAct" id="Q9JJC6">
    <property type="interactions" value="3"/>
</dbReference>
<dbReference type="MINT" id="Q9JJC6"/>
<dbReference type="STRING" id="10090.ENSMUSP00000050014"/>
<dbReference type="iPTMnet" id="Q9JJC6"/>
<dbReference type="PhosphoSitePlus" id="Q9JJC6"/>
<dbReference type="PaxDb" id="10090-ENSMUSP00000050014"/>
<dbReference type="PeptideAtlas" id="Q9JJC6"/>
<dbReference type="ProteomicsDB" id="253313"/>
<dbReference type="Pumba" id="Q9JJC6"/>
<dbReference type="Antibodypedia" id="31816">
    <property type="antibodies" value="100 antibodies from 24 providers"/>
</dbReference>
<dbReference type="DNASU" id="75695"/>
<dbReference type="Ensembl" id="ENSMUST00000062153.12">
    <property type="protein sequence ID" value="ENSMUSP00000050014.8"/>
    <property type="gene ID" value="ENSMUSG00000029392.13"/>
</dbReference>
<dbReference type="GeneID" id="75695"/>
<dbReference type="KEGG" id="mmu:75695"/>
<dbReference type="UCSC" id="uc008zpz.1">
    <property type="organism name" value="mouse"/>
</dbReference>
<dbReference type="AGR" id="MGI:1922945"/>
<dbReference type="CTD" id="353116"/>
<dbReference type="MGI" id="MGI:1922945">
    <property type="gene designation" value="Rilpl1"/>
</dbReference>
<dbReference type="VEuPathDB" id="HostDB:ENSMUSG00000029392"/>
<dbReference type="eggNOG" id="ENOG502QR9G">
    <property type="taxonomic scope" value="Eukaryota"/>
</dbReference>
<dbReference type="GeneTree" id="ENSGT00940000157897"/>
<dbReference type="HOGENOM" id="CLU_044133_3_0_1"/>
<dbReference type="InParanoid" id="Q9JJC6"/>
<dbReference type="OMA" id="SFGQWAD"/>
<dbReference type="OrthoDB" id="10069524at2759"/>
<dbReference type="PhylomeDB" id="Q9JJC6"/>
<dbReference type="TreeFam" id="TF313489"/>
<dbReference type="BioGRID-ORCS" id="75695">
    <property type="hits" value="4 hits in 76 CRISPR screens"/>
</dbReference>
<dbReference type="PRO" id="PR:Q9JJC6"/>
<dbReference type="Proteomes" id="UP000000589">
    <property type="component" value="Chromosome 5"/>
</dbReference>
<dbReference type="RNAct" id="Q9JJC6">
    <property type="molecule type" value="protein"/>
</dbReference>
<dbReference type="Bgee" id="ENSMUSG00000029392">
    <property type="expression patterns" value="Expressed in interventricular septum and 252 other cell types or tissues"/>
</dbReference>
<dbReference type="ExpressionAtlas" id="Q9JJC6">
    <property type="expression patterns" value="baseline and differential"/>
</dbReference>
<dbReference type="GO" id="GO:0005814">
    <property type="term" value="C:centriole"/>
    <property type="evidence" value="ECO:0007669"/>
    <property type="project" value="UniProtKB-SubCell"/>
</dbReference>
<dbReference type="GO" id="GO:0005813">
    <property type="term" value="C:centrosome"/>
    <property type="evidence" value="ECO:0000314"/>
    <property type="project" value="UniProtKB"/>
</dbReference>
<dbReference type="GO" id="GO:0036064">
    <property type="term" value="C:ciliary basal body"/>
    <property type="evidence" value="ECO:0007669"/>
    <property type="project" value="Ensembl"/>
</dbReference>
<dbReference type="GO" id="GO:0005929">
    <property type="term" value="C:cilium"/>
    <property type="evidence" value="ECO:0000314"/>
    <property type="project" value="UniProtKB"/>
</dbReference>
<dbReference type="GO" id="GO:0005829">
    <property type="term" value="C:cytosol"/>
    <property type="evidence" value="ECO:0000250"/>
    <property type="project" value="UniProtKB"/>
</dbReference>
<dbReference type="GO" id="GO:0005654">
    <property type="term" value="C:nucleoplasm"/>
    <property type="evidence" value="ECO:0007669"/>
    <property type="project" value="Ensembl"/>
</dbReference>
<dbReference type="GO" id="GO:0005886">
    <property type="term" value="C:plasma membrane"/>
    <property type="evidence" value="ECO:0007669"/>
    <property type="project" value="Ensembl"/>
</dbReference>
<dbReference type="GO" id="GO:0046983">
    <property type="term" value="F:protein dimerization activity"/>
    <property type="evidence" value="ECO:0007669"/>
    <property type="project" value="InterPro"/>
</dbReference>
<dbReference type="GO" id="GO:0003382">
    <property type="term" value="P:epithelial cell morphogenesis"/>
    <property type="evidence" value="ECO:0000315"/>
    <property type="project" value="UniProtKB"/>
</dbReference>
<dbReference type="GO" id="GO:1903445">
    <property type="term" value="P:protein transport from ciliary membrane to plasma membrane"/>
    <property type="evidence" value="ECO:0000315"/>
    <property type="project" value="UniProtKB"/>
</dbReference>
<dbReference type="CDD" id="cd14445">
    <property type="entry name" value="RILP-like"/>
    <property type="match status" value="1"/>
</dbReference>
<dbReference type="FunFam" id="1.20.58.1770:FF:000002">
    <property type="entry name" value="RILP-like protein 1 isoform X1"/>
    <property type="match status" value="1"/>
</dbReference>
<dbReference type="Gene3D" id="1.20.58.1770">
    <property type="match status" value="1"/>
</dbReference>
<dbReference type="Gene3D" id="6.10.230.10">
    <property type="match status" value="1"/>
</dbReference>
<dbReference type="InterPro" id="IPR051241">
    <property type="entry name" value="DZIP_RILPL"/>
</dbReference>
<dbReference type="InterPro" id="IPR034743">
    <property type="entry name" value="RH1"/>
</dbReference>
<dbReference type="InterPro" id="IPR034744">
    <property type="entry name" value="RH2"/>
</dbReference>
<dbReference type="InterPro" id="IPR021563">
    <property type="entry name" value="RILP_dimer"/>
</dbReference>
<dbReference type="PANTHER" id="PTHR21502:SF6">
    <property type="entry name" value="RILP-LIKE PROTEIN 1"/>
    <property type="match status" value="1"/>
</dbReference>
<dbReference type="PANTHER" id="PTHR21502">
    <property type="entry name" value="ZINC FINGER PROTEIN DZIP1"/>
    <property type="match status" value="1"/>
</dbReference>
<dbReference type="Pfam" id="PF09744">
    <property type="entry name" value="RH1"/>
    <property type="match status" value="1"/>
</dbReference>
<dbReference type="Pfam" id="PF11461">
    <property type="entry name" value="RILP"/>
    <property type="match status" value="1"/>
</dbReference>
<dbReference type="SUPFAM" id="SSF161256">
    <property type="entry name" value="RILP dimerisation region"/>
    <property type="match status" value="1"/>
</dbReference>
<dbReference type="PROSITE" id="PS51776">
    <property type="entry name" value="RH1"/>
    <property type="match status" value="1"/>
</dbReference>
<dbReference type="PROSITE" id="PS51777">
    <property type="entry name" value="RH2"/>
    <property type="match status" value="1"/>
</dbReference>
<reference key="1">
    <citation type="submission" date="2000-04" db="EMBL/GenBank/DDBJ databases">
        <title>Isolation of full-length cDNA clones from mouse brain cDNA library made by oligo-capping method.</title>
        <authorList>
            <person name="Osada N."/>
            <person name="Kusuda J."/>
            <person name="Tanuma R."/>
            <person name="Ito A."/>
            <person name="Hirata M."/>
            <person name="Sugano S."/>
            <person name="Hashimoto K."/>
        </authorList>
    </citation>
    <scope>NUCLEOTIDE SEQUENCE [LARGE SCALE MRNA]</scope>
    <source>
        <strain>C57BL/6J</strain>
        <tissue>Brain</tissue>
    </source>
</reference>
<reference key="2">
    <citation type="journal article" date="2004" name="Genome Res.">
        <title>The status, quality, and expansion of the NIH full-length cDNA project: the Mammalian Gene Collection (MGC).</title>
        <authorList>
            <consortium name="The MGC Project Team"/>
        </authorList>
    </citation>
    <scope>NUCLEOTIDE SEQUENCE [LARGE SCALE MRNA]</scope>
    <source>
        <strain>C57BL/6J</strain>
        <tissue>Brain</tissue>
    </source>
</reference>
<reference key="3">
    <citation type="journal article" date="2010" name="Cell">
        <title>A tissue-specific atlas of mouse protein phosphorylation and expression.</title>
        <authorList>
            <person name="Huttlin E.L."/>
            <person name="Jedrychowski M.P."/>
            <person name="Elias J.E."/>
            <person name="Goswami T."/>
            <person name="Rad R."/>
            <person name="Beausoleil S.A."/>
            <person name="Villen J."/>
            <person name="Haas W."/>
            <person name="Sowa M.E."/>
            <person name="Gygi S.P."/>
        </authorList>
    </citation>
    <scope>PHOSPHORYLATION [LARGE SCALE ANALYSIS] AT SER-259</scope>
    <scope>IDENTIFICATION BY MASS SPECTROMETRY [LARGE SCALE ANALYSIS]</scope>
    <source>
        <tissue>Brain</tissue>
        <tissue>Kidney</tissue>
        <tissue>Lung</tissue>
        <tissue>Spleen</tissue>
    </source>
</reference>
<reference key="4">
    <citation type="journal article" date="2013" name="Mol. Biol. Cell">
        <title>The Rilp-like proteins Rilpl1 and Rilpl2 regulate ciliary membrane content.</title>
        <authorList>
            <person name="Schaub J.R."/>
            <person name="Stearns T."/>
        </authorList>
    </citation>
    <scope>FUNCTION</scope>
    <scope>SUBCELLULAR LOCATION</scope>
</reference>
<reference key="5">
    <citation type="journal article" date="2017" name="Elife">
        <title>Systematic proteomic analysis of LRRK2-mediated Rab GTPase phosphorylation establishes a connection to ciliogenesis.</title>
        <authorList>
            <person name="Steger M."/>
            <person name="Diez F."/>
            <person name="Dhekne H.S."/>
            <person name="Lis P."/>
            <person name="Nirujogi R.S."/>
            <person name="Karayel O."/>
            <person name="Tonelli F."/>
            <person name="Martinez T.N."/>
            <person name="Lorentzen E."/>
            <person name="Pfeffer S.R."/>
            <person name="Alessi D.R."/>
            <person name="Mann M."/>
        </authorList>
    </citation>
    <scope>INTERACTION WITH RAB8A</scope>
</reference>
<sequence>MEEPLGSPPAALSALEKNVAELTVMDVYDIASLVGHEFERVIDQHGCESIARLMPKVVRVLEILEVLVSRHHVAPELDELRLELDRLRVERMDRIEKERKHQKELELVEDVWRGEAQDLLSQIAQLQEENKQLMTNLNHKDVGFSEEEFQKQEGMSERERQVMKRLKEVVDKQRDELRAKDRELGLKNEDVEALQQQQTRLMKINHDLRHRVTVVEAQGKALIEQKVELEADLQTKEQEMGSLRAELGKLRERLQGEHSQNGEEEEAEIQPQPDGEESISDAEKAALDLKDPNRPRFTLQELRDVLHERNELKSKVFLLQEELAYYKSEEIEEENRIPQPPPITHPRTSPQPESGIKRLFSFFSRDKKRLANTQRPTHIHESFGQWAITQRDDGYTEQGQEALQHL</sequence>
<organism>
    <name type="scientific">Mus musculus</name>
    <name type="common">Mouse</name>
    <dbReference type="NCBI Taxonomy" id="10090"/>
    <lineage>
        <taxon>Eukaryota</taxon>
        <taxon>Metazoa</taxon>
        <taxon>Chordata</taxon>
        <taxon>Craniata</taxon>
        <taxon>Vertebrata</taxon>
        <taxon>Euteleostomi</taxon>
        <taxon>Mammalia</taxon>
        <taxon>Eutheria</taxon>
        <taxon>Euarchontoglires</taxon>
        <taxon>Glires</taxon>
        <taxon>Rodentia</taxon>
        <taxon>Myomorpha</taxon>
        <taxon>Muroidea</taxon>
        <taxon>Muridae</taxon>
        <taxon>Murinae</taxon>
        <taxon>Mus</taxon>
        <taxon>Mus</taxon>
    </lineage>
</organism>
<evidence type="ECO:0000250" key="1"/>
<evidence type="ECO:0000250" key="2">
    <source>
        <dbReference type="UniProtKB" id="D3ZUQ0"/>
    </source>
</evidence>
<evidence type="ECO:0000250" key="3">
    <source>
        <dbReference type="UniProtKB" id="Q5EBL4"/>
    </source>
</evidence>
<evidence type="ECO:0000255" key="4"/>
<evidence type="ECO:0000255" key="5">
    <source>
        <dbReference type="PROSITE-ProRule" id="PRU01112"/>
    </source>
</evidence>
<evidence type="ECO:0000255" key="6">
    <source>
        <dbReference type="PROSITE-ProRule" id="PRU01113"/>
    </source>
</evidence>
<evidence type="ECO:0000256" key="7">
    <source>
        <dbReference type="SAM" id="MobiDB-lite"/>
    </source>
</evidence>
<evidence type="ECO:0000269" key="8">
    <source>
    </source>
</evidence>
<evidence type="ECO:0000269" key="9">
    <source>
    </source>
</evidence>
<evidence type="ECO:0000305" key="10"/>
<evidence type="ECO:0007744" key="11">
    <source>
    </source>
</evidence>
<accession>Q9JJC6</accession>
<accession>Q80WV8</accession>
<comment type="function">
    <text evidence="2 3 8">Neuroprotective protein, which acts by sequestring GAPDH in the cytosol and prevent the apoptotic function of GAPDH in the nucleus (By similarity). Competes with SIAH1 for binding GAPDH (By similarity). Does not regulate lysosomal morphology and distribution (By similarity). Plays a role in the regulation of cell shape and polarity (PubMed:23264467). Plays a role in cellular protein transport, including protein transport away from primary cilia (PubMed:23264467). Binds to RAB10 following LRRK2-mediated RAB10 phosphorylation which leads to inhibition of ciliogenesis (By similarity).</text>
</comment>
<comment type="subunit">
    <text evidence="2 3 9">Interacts (when S-nitrosylated) with GAPDH (By similarity). Interacts with RAB8A; interaction is dependent on the phosphorylation of 'Thr-72' of RAB8A (PubMed:29125462). Interacts with RAB10 and RAB12; the interaction is dependent on the phosphorylation of 'Thr-73' of RAB10, and 'Ser-105' of RAB12 (By similarity).</text>
</comment>
<comment type="subcellular location">
    <subcellularLocation>
        <location evidence="3">Cytoplasm</location>
        <location evidence="3">Cytosol</location>
    </subcellularLocation>
    <subcellularLocation>
        <location evidence="8">Cell projection</location>
        <location evidence="8">Cilium</location>
    </subcellularLocation>
    <subcellularLocation>
        <location evidence="8">Cytoplasm</location>
        <location evidence="8">Cytoskeleton</location>
        <location evidence="8">Microtubule organizing center</location>
        <location evidence="8">Centrosome</location>
        <location evidence="8">Centriole</location>
    </subcellularLocation>
</comment>
<comment type="PTM">
    <text evidence="1">S-nitrosylation is required for the interaction with GAPDH.</text>
</comment>
<comment type="similarity">
    <text evidence="10">Belongs to the RILPL family.</text>
</comment>
<feature type="chain" id="PRO_0000299311" description="RILP-like protein 1">
    <location>
        <begin position="1"/>
        <end position="406"/>
    </location>
</feature>
<feature type="domain" description="RH1" evidence="5">
    <location>
        <begin position="10"/>
        <end position="97"/>
    </location>
</feature>
<feature type="domain" description="RH2" evidence="6">
    <location>
        <begin position="294"/>
        <end position="359"/>
    </location>
</feature>
<feature type="region of interest" description="Disordered" evidence="7">
    <location>
        <begin position="255"/>
        <end position="280"/>
    </location>
</feature>
<feature type="region of interest" description="Disordered" evidence="7">
    <location>
        <begin position="330"/>
        <end position="354"/>
    </location>
</feature>
<feature type="coiled-coil region" evidence="4">
    <location>
        <begin position="76"/>
        <end position="258"/>
    </location>
</feature>
<feature type="compositionally biased region" description="Acidic residues" evidence="7">
    <location>
        <begin position="262"/>
        <end position="280"/>
    </location>
</feature>
<feature type="modified residue" description="Phosphoserine" evidence="2">
    <location>
        <position position="7"/>
    </location>
</feature>
<feature type="modified residue" description="S-nitrosocysteine" evidence="2">
    <location>
        <position position="47"/>
    </location>
</feature>
<feature type="modified residue" description="Phosphoserine" evidence="11">
    <location>
        <position position="259"/>
    </location>
</feature>